<feature type="chain" id="PRO_1000165097" description="L-fucose isomerase">
    <location>
        <begin position="1"/>
        <end position="588"/>
    </location>
</feature>
<feature type="active site" description="Proton acceptor" evidence="1">
    <location>
        <position position="335"/>
    </location>
</feature>
<feature type="active site" description="Proton acceptor" evidence="1">
    <location>
        <position position="359"/>
    </location>
</feature>
<feature type="binding site" evidence="1">
    <location>
        <position position="335"/>
    </location>
    <ligand>
        <name>Mn(2+)</name>
        <dbReference type="ChEBI" id="CHEBI:29035"/>
    </ligand>
</feature>
<feature type="binding site" evidence="1">
    <location>
        <position position="359"/>
    </location>
    <ligand>
        <name>Mn(2+)</name>
        <dbReference type="ChEBI" id="CHEBI:29035"/>
    </ligand>
</feature>
<feature type="binding site" evidence="1">
    <location>
        <position position="525"/>
    </location>
    <ligand>
        <name>Mn(2+)</name>
        <dbReference type="ChEBI" id="CHEBI:29035"/>
    </ligand>
</feature>
<name>FUCI_STRP7</name>
<protein>
    <recommendedName>
        <fullName evidence="1">L-fucose isomerase</fullName>
        <ecNumber evidence="1">5.3.1.25</ecNumber>
    </recommendedName>
    <alternativeName>
        <fullName evidence="1">6-deoxy-L-galactose isomerase</fullName>
    </alternativeName>
    <alternativeName>
        <fullName>FucIase</fullName>
    </alternativeName>
</protein>
<keyword id="KW-0119">Carbohydrate metabolism</keyword>
<keyword id="KW-0963">Cytoplasm</keyword>
<keyword id="KW-0294">Fucose metabolism</keyword>
<keyword id="KW-0413">Isomerase</keyword>
<keyword id="KW-0464">Manganese</keyword>
<keyword id="KW-0479">Metal-binding</keyword>
<organism>
    <name type="scientific">Streptococcus pneumoniae (strain 70585)</name>
    <dbReference type="NCBI Taxonomy" id="488221"/>
    <lineage>
        <taxon>Bacteria</taxon>
        <taxon>Bacillati</taxon>
        <taxon>Bacillota</taxon>
        <taxon>Bacilli</taxon>
        <taxon>Lactobacillales</taxon>
        <taxon>Streptococcaceae</taxon>
        <taxon>Streptococcus</taxon>
    </lineage>
</organism>
<comment type="function">
    <text evidence="1">Converts the aldose L-fucose into the corresponding ketose L-fuculose.</text>
</comment>
<comment type="catalytic activity">
    <reaction evidence="1">
        <text>L-fucose = L-fuculose</text>
        <dbReference type="Rhea" id="RHEA:17233"/>
        <dbReference type="ChEBI" id="CHEBI:2181"/>
        <dbReference type="ChEBI" id="CHEBI:17617"/>
        <dbReference type="EC" id="5.3.1.25"/>
    </reaction>
</comment>
<comment type="cofactor">
    <cofactor evidence="1">
        <name>Mn(2+)</name>
        <dbReference type="ChEBI" id="CHEBI:29035"/>
    </cofactor>
</comment>
<comment type="pathway">
    <text evidence="1">Carbohydrate degradation; L-fucose degradation; L-lactaldehyde and glycerone phosphate from L-fucose: step 1/3.</text>
</comment>
<comment type="subcellular location">
    <subcellularLocation>
        <location evidence="1">Cytoplasm</location>
    </subcellularLocation>
</comment>
<comment type="similarity">
    <text evidence="1">Belongs to the L-fucose isomerase family.</text>
</comment>
<evidence type="ECO:0000255" key="1">
    <source>
        <dbReference type="HAMAP-Rule" id="MF_01254"/>
    </source>
</evidence>
<reference key="1">
    <citation type="journal article" date="2010" name="Genome Biol.">
        <title>Structure and dynamics of the pan-genome of Streptococcus pneumoniae and closely related species.</title>
        <authorList>
            <person name="Donati C."/>
            <person name="Hiller N.L."/>
            <person name="Tettelin H."/>
            <person name="Muzzi A."/>
            <person name="Croucher N.J."/>
            <person name="Angiuoli S.V."/>
            <person name="Oggioni M."/>
            <person name="Dunning Hotopp J.C."/>
            <person name="Hu F.Z."/>
            <person name="Riley D.R."/>
            <person name="Covacci A."/>
            <person name="Mitchell T.J."/>
            <person name="Bentley S.D."/>
            <person name="Kilian M."/>
            <person name="Ehrlich G.D."/>
            <person name="Rappuoli R."/>
            <person name="Moxon E.R."/>
            <person name="Masignani V."/>
        </authorList>
    </citation>
    <scope>NUCLEOTIDE SEQUENCE [LARGE SCALE GENOMIC DNA]</scope>
    <source>
        <strain>70585</strain>
    </source>
</reference>
<proteinExistence type="inferred from homology"/>
<dbReference type="EC" id="5.3.1.25" evidence="1"/>
<dbReference type="EMBL" id="CP000918">
    <property type="protein sequence ID" value="ACO17577.1"/>
    <property type="molecule type" value="Genomic_DNA"/>
</dbReference>
<dbReference type="RefSeq" id="WP_000614254.1">
    <property type="nucleotide sequence ID" value="NC_012468.1"/>
</dbReference>
<dbReference type="SMR" id="C1CB02"/>
<dbReference type="KEGG" id="snm:SP70585_2284"/>
<dbReference type="HOGENOM" id="CLU_033326_1_0_9"/>
<dbReference type="UniPathway" id="UPA00563">
    <property type="reaction ID" value="UER00624"/>
</dbReference>
<dbReference type="Proteomes" id="UP000002211">
    <property type="component" value="Chromosome"/>
</dbReference>
<dbReference type="GO" id="GO:0005737">
    <property type="term" value="C:cytoplasm"/>
    <property type="evidence" value="ECO:0007669"/>
    <property type="project" value="UniProtKB-SubCell"/>
</dbReference>
<dbReference type="GO" id="GO:0008790">
    <property type="term" value="F:arabinose isomerase activity"/>
    <property type="evidence" value="ECO:0007669"/>
    <property type="project" value="TreeGrafter"/>
</dbReference>
<dbReference type="GO" id="GO:0008736">
    <property type="term" value="F:L-fucose isomerase activity"/>
    <property type="evidence" value="ECO:0007669"/>
    <property type="project" value="UniProtKB-UniRule"/>
</dbReference>
<dbReference type="GO" id="GO:0030145">
    <property type="term" value="F:manganese ion binding"/>
    <property type="evidence" value="ECO:0007669"/>
    <property type="project" value="UniProtKB-UniRule"/>
</dbReference>
<dbReference type="GO" id="GO:0019571">
    <property type="term" value="P:D-arabinose catabolic process"/>
    <property type="evidence" value="ECO:0007669"/>
    <property type="project" value="TreeGrafter"/>
</dbReference>
<dbReference type="GO" id="GO:0042355">
    <property type="term" value="P:L-fucose catabolic process"/>
    <property type="evidence" value="ECO:0007669"/>
    <property type="project" value="UniProtKB-UniRule"/>
</dbReference>
<dbReference type="CDD" id="cd03556">
    <property type="entry name" value="L-fucose_isomerase"/>
    <property type="match status" value="1"/>
</dbReference>
<dbReference type="FunFam" id="3.20.14.10:FF:000001">
    <property type="entry name" value="L-fucose isomerase"/>
    <property type="match status" value="1"/>
</dbReference>
<dbReference type="FunFam" id="3.40.50.1070:FF:000001">
    <property type="entry name" value="L-fucose isomerase"/>
    <property type="match status" value="1"/>
</dbReference>
<dbReference type="Gene3D" id="3.40.50.1070">
    <property type="match status" value="1"/>
</dbReference>
<dbReference type="Gene3D" id="3.40.275.10">
    <property type="entry name" value="L-fucose Isomerase, Chain A, domain 2"/>
    <property type="match status" value="1"/>
</dbReference>
<dbReference type="Gene3D" id="3.20.14.10">
    <property type="entry name" value="L-fucose/L-arabinose isomerase, C-terminal"/>
    <property type="match status" value="1"/>
</dbReference>
<dbReference type="HAMAP" id="MF_01254">
    <property type="entry name" value="Fucose_iso"/>
    <property type="match status" value="1"/>
</dbReference>
<dbReference type="InterPro" id="IPR004216">
    <property type="entry name" value="Fuc/Ara_isomerase_C"/>
</dbReference>
<dbReference type="InterPro" id="IPR038393">
    <property type="entry name" value="Fuc_iso_dom3_sf"/>
</dbReference>
<dbReference type="InterPro" id="IPR015888">
    <property type="entry name" value="Fuc_isomerase_C"/>
</dbReference>
<dbReference type="InterPro" id="IPR038391">
    <property type="entry name" value="Fucose_iso_dom1_sf"/>
</dbReference>
<dbReference type="InterPro" id="IPR012888">
    <property type="entry name" value="Fucose_iso_N1"/>
</dbReference>
<dbReference type="InterPro" id="IPR005763">
    <property type="entry name" value="Fucose_isomerase"/>
</dbReference>
<dbReference type="InterPro" id="IPR038392">
    <property type="entry name" value="Fucose_isomerase_dom2_sf"/>
</dbReference>
<dbReference type="InterPro" id="IPR009015">
    <property type="entry name" value="Fucose_isomerase_N/cen_sf"/>
</dbReference>
<dbReference type="InterPro" id="IPR012889">
    <property type="entry name" value="Fucose_isomerase_N2"/>
</dbReference>
<dbReference type="NCBIfam" id="TIGR01089">
    <property type="entry name" value="fucI"/>
    <property type="match status" value="1"/>
</dbReference>
<dbReference type="NCBIfam" id="NF008220">
    <property type="entry name" value="PRK10991.1"/>
    <property type="match status" value="1"/>
</dbReference>
<dbReference type="PANTHER" id="PTHR37840">
    <property type="entry name" value="L-FUCOSE ISOMERASE"/>
    <property type="match status" value="1"/>
</dbReference>
<dbReference type="PANTHER" id="PTHR37840:SF1">
    <property type="entry name" value="L-FUCOSE ISOMERASE"/>
    <property type="match status" value="1"/>
</dbReference>
<dbReference type="Pfam" id="PF02952">
    <property type="entry name" value="Fucose_iso_C"/>
    <property type="match status" value="1"/>
</dbReference>
<dbReference type="Pfam" id="PF07881">
    <property type="entry name" value="Fucose_iso_N1"/>
    <property type="match status" value="1"/>
</dbReference>
<dbReference type="Pfam" id="PF07882">
    <property type="entry name" value="Fucose_iso_N2"/>
    <property type="match status" value="1"/>
</dbReference>
<dbReference type="SUPFAM" id="SSF50443">
    <property type="entry name" value="FucI/AraA C-terminal domain-like"/>
    <property type="match status" value="1"/>
</dbReference>
<dbReference type="SUPFAM" id="SSF53743">
    <property type="entry name" value="FucI/AraA N-terminal and middle domains"/>
    <property type="match status" value="1"/>
</dbReference>
<sequence>MIQHPRIGIRPTIDGRRQGVRESLEVQTMNMAKSVADLISSTLKYPDGEPVECVISPSTIGRVPEAAASHELFKKSNVCATITVTPCWCYGSETMDMSPDIPHAIWGFNGTERPGAVYLAAVLASHAQKGIPAFGIYGRDVQEANDTDIPEDVKEKLLRYARAALATGLMRDTAYLSMGSVSMGIGGSIVNPDFFQEYLGMRNESVDMTEFTRRMDRGIYDPEEFERAMVWVKEHIKEGVDRNREDLILSKEEKEKQWEFVIKMFMIGRDLMVGNPRLAELGFEEEAVGHHALVAGFQGQRQWTDHFPNGDFMETFLNTQFDWNGIRKPFVFATENDSLNGVSMLFNYLLTNTPQIFADVRTYWSPEAVKRVTGHTLEGRAAAGFLHLINSGSCTLDGTGQATRDGKPVMKPFWELEESEVQAMLENTDFPPANREYFRGGGFSTRFLTKGDMPVTMVRLNLLKGVGPVLQIAEGYTLELPEDVHHTLDNRTDPGWPTTWFAPRLTGKGAFKSVYDVMNNWGANHGAITYGHIGADLITLASMLRIPVNMHNVPEEDIFRPKNWSLFGTEDLESADYRACQLLGPLHK</sequence>
<gene>
    <name evidence="1" type="primary">fucI</name>
    <name type="ordered locus">SP70585_2284</name>
</gene>
<accession>C1CB02</accession>